<accession>A5FZW9</accession>
<evidence type="ECO:0000250" key="1"/>
<evidence type="ECO:0000255" key="2">
    <source>
        <dbReference type="HAMAP-Rule" id="MF_00403"/>
    </source>
</evidence>
<evidence type="ECO:0000305" key="3"/>
<organism>
    <name type="scientific">Acidiphilium cryptum (strain JF-5)</name>
    <dbReference type="NCBI Taxonomy" id="349163"/>
    <lineage>
        <taxon>Bacteria</taxon>
        <taxon>Pseudomonadati</taxon>
        <taxon>Pseudomonadota</taxon>
        <taxon>Alphaproteobacteria</taxon>
        <taxon>Acetobacterales</taxon>
        <taxon>Acidocellaceae</taxon>
        <taxon>Acidiphilium</taxon>
    </lineage>
</organism>
<comment type="function">
    <text evidence="2">With S4 and S5 plays an important role in translational accuracy.</text>
</comment>
<comment type="function">
    <text evidence="2">Interacts with and stabilizes bases of the 16S rRNA that are involved in tRNA selection in the A site and with the mRNA backbone. Located at the interface of the 30S and 50S subunits, it traverses the body of the 30S subunit contacting proteins on the other side and probably holding the rRNA structure together. The combined cluster of proteins S8, S12 and S17 appears to hold together the shoulder and platform of the 30S subunit.</text>
</comment>
<comment type="subunit">
    <text evidence="2">Part of the 30S ribosomal subunit. Contacts proteins S8 and S17. May interact with IF1 in the 30S initiation complex.</text>
</comment>
<comment type="similarity">
    <text evidence="2">Belongs to the universal ribosomal protein uS12 family.</text>
</comment>
<protein>
    <recommendedName>
        <fullName evidence="2">Small ribosomal subunit protein uS12</fullName>
    </recommendedName>
    <alternativeName>
        <fullName evidence="3">30S ribosomal protein S12</fullName>
    </alternativeName>
</protein>
<proteinExistence type="inferred from homology"/>
<gene>
    <name evidence="2" type="primary">rpsL</name>
    <name type="ordered locus">Acry_1950</name>
</gene>
<dbReference type="EMBL" id="CP000697">
    <property type="protein sequence ID" value="ABQ31151.1"/>
    <property type="molecule type" value="Genomic_DNA"/>
</dbReference>
<dbReference type="RefSeq" id="WP_007424169.1">
    <property type="nucleotide sequence ID" value="NC_009484.1"/>
</dbReference>
<dbReference type="SMR" id="A5FZW9"/>
<dbReference type="STRING" id="349163.Acry_1950"/>
<dbReference type="KEGG" id="acr:Acry_1950"/>
<dbReference type="eggNOG" id="COG0048">
    <property type="taxonomic scope" value="Bacteria"/>
</dbReference>
<dbReference type="HOGENOM" id="CLU_104295_1_2_5"/>
<dbReference type="Proteomes" id="UP000000245">
    <property type="component" value="Chromosome"/>
</dbReference>
<dbReference type="GO" id="GO:0015935">
    <property type="term" value="C:small ribosomal subunit"/>
    <property type="evidence" value="ECO:0007669"/>
    <property type="project" value="InterPro"/>
</dbReference>
<dbReference type="GO" id="GO:0019843">
    <property type="term" value="F:rRNA binding"/>
    <property type="evidence" value="ECO:0007669"/>
    <property type="project" value="UniProtKB-UniRule"/>
</dbReference>
<dbReference type="GO" id="GO:0003735">
    <property type="term" value="F:structural constituent of ribosome"/>
    <property type="evidence" value="ECO:0007669"/>
    <property type="project" value="InterPro"/>
</dbReference>
<dbReference type="GO" id="GO:0000049">
    <property type="term" value="F:tRNA binding"/>
    <property type="evidence" value="ECO:0007669"/>
    <property type="project" value="UniProtKB-UniRule"/>
</dbReference>
<dbReference type="GO" id="GO:0006412">
    <property type="term" value="P:translation"/>
    <property type="evidence" value="ECO:0007669"/>
    <property type="project" value="UniProtKB-UniRule"/>
</dbReference>
<dbReference type="CDD" id="cd03368">
    <property type="entry name" value="Ribosomal_S12"/>
    <property type="match status" value="1"/>
</dbReference>
<dbReference type="FunFam" id="2.40.50.140:FF:000001">
    <property type="entry name" value="30S ribosomal protein S12"/>
    <property type="match status" value="1"/>
</dbReference>
<dbReference type="Gene3D" id="2.40.50.140">
    <property type="entry name" value="Nucleic acid-binding proteins"/>
    <property type="match status" value="1"/>
</dbReference>
<dbReference type="HAMAP" id="MF_00403_B">
    <property type="entry name" value="Ribosomal_uS12_B"/>
    <property type="match status" value="1"/>
</dbReference>
<dbReference type="InterPro" id="IPR012340">
    <property type="entry name" value="NA-bd_OB-fold"/>
</dbReference>
<dbReference type="InterPro" id="IPR006032">
    <property type="entry name" value="Ribosomal_uS12"/>
</dbReference>
<dbReference type="InterPro" id="IPR005679">
    <property type="entry name" value="Ribosomal_uS12_bac"/>
</dbReference>
<dbReference type="NCBIfam" id="TIGR00981">
    <property type="entry name" value="rpsL_bact"/>
    <property type="match status" value="1"/>
</dbReference>
<dbReference type="PANTHER" id="PTHR11652">
    <property type="entry name" value="30S RIBOSOMAL PROTEIN S12 FAMILY MEMBER"/>
    <property type="match status" value="1"/>
</dbReference>
<dbReference type="Pfam" id="PF00164">
    <property type="entry name" value="Ribosom_S12_S23"/>
    <property type="match status" value="1"/>
</dbReference>
<dbReference type="PIRSF" id="PIRSF002133">
    <property type="entry name" value="Ribosomal_S12/S23"/>
    <property type="match status" value="1"/>
</dbReference>
<dbReference type="PRINTS" id="PR01034">
    <property type="entry name" value="RIBOSOMALS12"/>
</dbReference>
<dbReference type="SUPFAM" id="SSF50249">
    <property type="entry name" value="Nucleic acid-binding proteins"/>
    <property type="match status" value="1"/>
</dbReference>
<dbReference type="PROSITE" id="PS00055">
    <property type="entry name" value="RIBOSOMAL_S12"/>
    <property type="match status" value="1"/>
</dbReference>
<reference key="1">
    <citation type="submission" date="2007-05" db="EMBL/GenBank/DDBJ databases">
        <title>Complete sequence of chromosome of Acidiphilium cryptum JF-5.</title>
        <authorList>
            <consortium name="US DOE Joint Genome Institute"/>
            <person name="Copeland A."/>
            <person name="Lucas S."/>
            <person name="Lapidus A."/>
            <person name="Barry K."/>
            <person name="Detter J.C."/>
            <person name="Glavina del Rio T."/>
            <person name="Hammon N."/>
            <person name="Israni S."/>
            <person name="Dalin E."/>
            <person name="Tice H."/>
            <person name="Pitluck S."/>
            <person name="Sims D."/>
            <person name="Brettin T."/>
            <person name="Bruce D."/>
            <person name="Han C."/>
            <person name="Schmutz J."/>
            <person name="Larimer F."/>
            <person name="Land M."/>
            <person name="Hauser L."/>
            <person name="Kyrpides N."/>
            <person name="Kim E."/>
            <person name="Magnuson T."/>
            <person name="Richardson P."/>
        </authorList>
    </citation>
    <scope>NUCLEOTIDE SEQUENCE [LARGE SCALE GENOMIC DNA]</scope>
    <source>
        <strain>JF-5</strain>
    </source>
</reference>
<name>RS12_ACICJ</name>
<feature type="chain" id="PRO_1000049767" description="Small ribosomal subunit protein uS12">
    <location>
        <begin position="1"/>
        <end position="123"/>
    </location>
</feature>
<feature type="modified residue" description="3-methylthioaspartic acid" evidence="1">
    <location>
        <position position="89"/>
    </location>
</feature>
<keyword id="KW-0488">Methylation</keyword>
<keyword id="KW-1185">Reference proteome</keyword>
<keyword id="KW-0687">Ribonucleoprotein</keyword>
<keyword id="KW-0689">Ribosomal protein</keyword>
<keyword id="KW-0694">RNA-binding</keyword>
<keyword id="KW-0699">rRNA-binding</keyword>
<keyword id="KW-0820">tRNA-binding</keyword>
<sequence>MPTINQLIAKGREVRAKRNKVPALQGCPQKRGVCTRVYTTTPKKPNSALRKVAKVRLTNGYEVVSYIPGEGHNLQEHSVVLIRGGRVKDLPGVRYHILRGVLDTQGIAKRRQRRSLYGAKRPK</sequence>